<organism>
    <name type="scientific">Yersinia pseudotuberculosis serotype O:1b (strain IP 31758)</name>
    <dbReference type="NCBI Taxonomy" id="349747"/>
    <lineage>
        <taxon>Bacteria</taxon>
        <taxon>Pseudomonadati</taxon>
        <taxon>Pseudomonadota</taxon>
        <taxon>Gammaproteobacteria</taxon>
        <taxon>Enterobacterales</taxon>
        <taxon>Yersiniaceae</taxon>
        <taxon>Yersinia</taxon>
    </lineage>
</organism>
<gene>
    <name evidence="1" type="primary">metAS</name>
    <name type="ordered locus">YpsIP31758_0292</name>
</gene>
<evidence type="ECO:0000255" key="1">
    <source>
        <dbReference type="HAMAP-Rule" id="MF_00295"/>
    </source>
</evidence>
<dbReference type="EC" id="2.3.1.46" evidence="1"/>
<dbReference type="EMBL" id="CP000720">
    <property type="protein sequence ID" value="ABS49019.1"/>
    <property type="molecule type" value="Genomic_DNA"/>
</dbReference>
<dbReference type="SMR" id="A7FDF8"/>
<dbReference type="KEGG" id="ypi:YpsIP31758_0292"/>
<dbReference type="HOGENOM" id="CLU_057851_0_1_6"/>
<dbReference type="UniPathway" id="UPA00051">
    <property type="reaction ID" value="UER00075"/>
</dbReference>
<dbReference type="Proteomes" id="UP000002412">
    <property type="component" value="Chromosome"/>
</dbReference>
<dbReference type="GO" id="GO:0005737">
    <property type="term" value="C:cytoplasm"/>
    <property type="evidence" value="ECO:0007669"/>
    <property type="project" value="UniProtKB-SubCell"/>
</dbReference>
<dbReference type="GO" id="GO:0004414">
    <property type="term" value="F:homoserine O-acetyltransferase activity"/>
    <property type="evidence" value="ECO:0007669"/>
    <property type="project" value="UniProtKB-UniRule"/>
</dbReference>
<dbReference type="GO" id="GO:0008899">
    <property type="term" value="F:homoserine O-succinyltransferase activity"/>
    <property type="evidence" value="ECO:0007669"/>
    <property type="project" value="UniProtKB-EC"/>
</dbReference>
<dbReference type="GO" id="GO:0019281">
    <property type="term" value="P:L-methionine biosynthetic process from homoserine via O-succinyl-L-homoserine and cystathionine"/>
    <property type="evidence" value="ECO:0007669"/>
    <property type="project" value="InterPro"/>
</dbReference>
<dbReference type="CDD" id="cd03131">
    <property type="entry name" value="GATase1_HTS"/>
    <property type="match status" value="1"/>
</dbReference>
<dbReference type="FunFam" id="3.40.50.880:FF:000004">
    <property type="entry name" value="Homoserine O-succinyltransferase"/>
    <property type="match status" value="1"/>
</dbReference>
<dbReference type="Gene3D" id="3.40.50.880">
    <property type="match status" value="1"/>
</dbReference>
<dbReference type="HAMAP" id="MF_00295">
    <property type="entry name" value="MetA_acyltransf"/>
    <property type="match status" value="1"/>
</dbReference>
<dbReference type="InterPro" id="IPR029062">
    <property type="entry name" value="Class_I_gatase-like"/>
</dbReference>
<dbReference type="InterPro" id="IPR005697">
    <property type="entry name" value="HST_MetA"/>
</dbReference>
<dbReference type="InterPro" id="IPR033752">
    <property type="entry name" value="MetA_family"/>
</dbReference>
<dbReference type="NCBIfam" id="TIGR01001">
    <property type="entry name" value="metA"/>
    <property type="match status" value="1"/>
</dbReference>
<dbReference type="PANTHER" id="PTHR20919">
    <property type="entry name" value="HOMOSERINE O-SUCCINYLTRANSFERASE"/>
    <property type="match status" value="1"/>
</dbReference>
<dbReference type="PANTHER" id="PTHR20919:SF0">
    <property type="entry name" value="HOMOSERINE O-SUCCINYLTRANSFERASE"/>
    <property type="match status" value="1"/>
</dbReference>
<dbReference type="Pfam" id="PF04204">
    <property type="entry name" value="HTS"/>
    <property type="match status" value="1"/>
</dbReference>
<dbReference type="PIRSF" id="PIRSF000450">
    <property type="entry name" value="H_ser_succinyltr"/>
    <property type="match status" value="1"/>
</dbReference>
<dbReference type="SUPFAM" id="SSF52317">
    <property type="entry name" value="Class I glutamine amidotransferase-like"/>
    <property type="match status" value="1"/>
</dbReference>
<feature type="chain" id="PRO_1000059294" description="Homoserine O-succinyltransferase">
    <location>
        <begin position="1"/>
        <end position="309"/>
    </location>
</feature>
<feature type="active site" description="Acyl-thioester intermediate" evidence="1">
    <location>
        <position position="142"/>
    </location>
</feature>
<feature type="active site" description="Proton acceptor" evidence="1">
    <location>
        <position position="235"/>
    </location>
</feature>
<feature type="active site" evidence="1">
    <location>
        <position position="237"/>
    </location>
</feature>
<feature type="binding site" evidence="1">
    <location>
        <position position="163"/>
    </location>
    <ligand>
        <name>substrate</name>
    </ligand>
</feature>
<feature type="binding site" evidence="1">
    <location>
        <position position="192"/>
    </location>
    <ligand>
        <name>substrate</name>
    </ligand>
</feature>
<feature type="binding site" evidence="1">
    <location>
        <position position="249"/>
    </location>
    <ligand>
        <name>substrate</name>
    </ligand>
</feature>
<feature type="site" description="Important for acyl-CoA specificity" evidence="1">
    <location>
        <position position="111"/>
    </location>
</feature>
<feature type="site" description="Important for substrate specificity" evidence="1">
    <location>
        <position position="192"/>
    </location>
</feature>
<sequence>MPIRVPDELPAVSFLRNENVFVMASSRAKTQEIRPLKVLILNLMPKKIETENQFLRLLSNSPLQVDIQLLRVDSRESKNTPTEHLNNFYCDFEDIQDQNFDGLIVTGAPLGLVDFCDVAYWPQIERIIAWAKEHVTSTLFVCWAVQAALNILYGIPKMTREVKLSGIYQHQTLEPLALLTRGFDETFLAPHSRYADFPVEVLQQYTDLDILVSSEEAGAYLFASKDKRVAFVTGHPEYDVDTLAGEYQRDLAAGLNPQVPLNYFPSDDASLRPKASWRSHGHLLFANWLNYYVYQITPFDLRHMNPTLD</sequence>
<name>METAS_YERP3</name>
<comment type="function">
    <text evidence="1">Transfers a succinyl group from succinyl-CoA to L-homoserine, forming succinyl-L-homoserine.</text>
</comment>
<comment type="catalytic activity">
    <reaction evidence="1">
        <text>L-homoserine + succinyl-CoA = O-succinyl-L-homoserine + CoA</text>
        <dbReference type="Rhea" id="RHEA:22008"/>
        <dbReference type="ChEBI" id="CHEBI:57287"/>
        <dbReference type="ChEBI" id="CHEBI:57292"/>
        <dbReference type="ChEBI" id="CHEBI:57476"/>
        <dbReference type="ChEBI" id="CHEBI:57661"/>
        <dbReference type="EC" id="2.3.1.46"/>
    </reaction>
</comment>
<comment type="pathway">
    <text evidence="1">Amino-acid biosynthesis; L-methionine biosynthesis via de novo pathway; O-succinyl-L-homoserine from L-homoserine: step 1/1.</text>
</comment>
<comment type="subcellular location">
    <subcellularLocation>
        <location evidence="1">Cytoplasm</location>
    </subcellularLocation>
</comment>
<comment type="similarity">
    <text evidence="1">Belongs to the MetA family.</text>
</comment>
<protein>
    <recommendedName>
        <fullName evidence="1">Homoserine O-succinyltransferase</fullName>
        <shortName evidence="1">HST</shortName>
        <ecNumber evidence="1">2.3.1.46</ecNumber>
    </recommendedName>
    <alternativeName>
        <fullName evidence="1">Homoserine transsuccinylase</fullName>
        <shortName evidence="1">HTS</shortName>
    </alternativeName>
</protein>
<accession>A7FDF8</accession>
<proteinExistence type="inferred from homology"/>
<reference key="1">
    <citation type="journal article" date="2007" name="PLoS Genet.">
        <title>The complete genome sequence of Yersinia pseudotuberculosis IP31758, the causative agent of Far East scarlet-like fever.</title>
        <authorList>
            <person name="Eppinger M."/>
            <person name="Rosovitz M.J."/>
            <person name="Fricke W.F."/>
            <person name="Rasko D.A."/>
            <person name="Kokorina G."/>
            <person name="Fayolle C."/>
            <person name="Lindler L.E."/>
            <person name="Carniel E."/>
            <person name="Ravel J."/>
        </authorList>
    </citation>
    <scope>NUCLEOTIDE SEQUENCE [LARGE SCALE GENOMIC DNA]</scope>
    <source>
        <strain>IP 31758</strain>
    </source>
</reference>
<keyword id="KW-0012">Acyltransferase</keyword>
<keyword id="KW-0028">Amino-acid biosynthesis</keyword>
<keyword id="KW-0963">Cytoplasm</keyword>
<keyword id="KW-0486">Methionine biosynthesis</keyword>
<keyword id="KW-0808">Transferase</keyword>